<keyword id="KW-0030">Aminoacyl-tRNA synthetase</keyword>
<keyword id="KW-0067">ATP-binding</keyword>
<keyword id="KW-0963">Cytoplasm</keyword>
<keyword id="KW-0436">Ligase</keyword>
<keyword id="KW-0547">Nucleotide-binding</keyword>
<keyword id="KW-0648">Protein biosynthesis</keyword>
<keyword id="KW-1185">Reference proteome</keyword>
<evidence type="ECO:0000255" key="1">
    <source>
        <dbReference type="HAMAP-Rule" id="MF_00022"/>
    </source>
</evidence>
<evidence type="ECO:0000305" key="2"/>
<proteinExistence type="inferred from homology"/>
<organism>
    <name type="scientific">Legionella pneumophila subsp. pneumophila (strain Philadelphia 1 / ATCC 33152 / DSM 7513)</name>
    <dbReference type="NCBI Taxonomy" id="272624"/>
    <lineage>
        <taxon>Bacteria</taxon>
        <taxon>Pseudomonadati</taxon>
        <taxon>Pseudomonadota</taxon>
        <taxon>Gammaproteobacteria</taxon>
        <taxon>Legionellales</taxon>
        <taxon>Legionellaceae</taxon>
        <taxon>Legionella</taxon>
    </lineage>
</organism>
<sequence length="470" mass="53574">MTVRTRFAPSPTGFLHVGGVRTALFSWLYAKHHNGQFILRIEDTDRERSTQESVQAILDGMAWLGLNFDEGPYYQTERYARYQQVAQQLLEEGKAYRCQCSKERLEALREAQLAAKEKPRYDGHCRNQSLPDSGIPYVIRFRNPDAGIVSFHDEVYGDIHVDNSELDDLILVRSDGHPTYNFAVVIDDWDMKITHVIRGDDHINNTPRQINLFKALDAPVPVFAHLPMILGEDGKRLSKRHGAVSVLQFKELGVLPHALLNYLVRLGWSHGDQEIFSVQEMITSFDLKNVSRGVSSFNYDKLYWLNQHYQKSDSPESVANALQWHFEQAGIDLNQGPDLKDLVAVQAERCKSLAEMCQISQYFYTDIIEYNEDAVKKHLRPVVLEPLMVLHERLKALDEWKNDKIQECINDVSLQFDLNLGKIAQPLRVAVTGSGTSPSIDMTLALLGKNKSIKRLEDALEKIRARASVV</sequence>
<name>SYE_LEGPH</name>
<reference key="1">
    <citation type="journal article" date="2004" name="Science">
        <title>The genomic sequence of the accidental pathogen Legionella pneumophila.</title>
        <authorList>
            <person name="Chien M."/>
            <person name="Morozova I."/>
            <person name="Shi S."/>
            <person name="Sheng H."/>
            <person name="Chen J."/>
            <person name="Gomez S.M."/>
            <person name="Asamani G."/>
            <person name="Hill K."/>
            <person name="Nuara J."/>
            <person name="Feder M."/>
            <person name="Rineer J."/>
            <person name="Greenberg J.J."/>
            <person name="Steshenko V."/>
            <person name="Park S.H."/>
            <person name="Zhao B."/>
            <person name="Teplitskaya E."/>
            <person name="Edwards J.R."/>
            <person name="Pampou S."/>
            <person name="Georghiou A."/>
            <person name="Chou I.-C."/>
            <person name="Iannuccilli W."/>
            <person name="Ulz M.E."/>
            <person name="Kim D.H."/>
            <person name="Geringer-Sameth A."/>
            <person name="Goldsberry C."/>
            <person name="Morozov P."/>
            <person name="Fischer S.G."/>
            <person name="Segal G."/>
            <person name="Qu X."/>
            <person name="Rzhetsky A."/>
            <person name="Zhang P."/>
            <person name="Cayanis E."/>
            <person name="De Jong P.J."/>
            <person name="Ju J."/>
            <person name="Kalachikov S."/>
            <person name="Shuman H.A."/>
            <person name="Russo J.J."/>
        </authorList>
    </citation>
    <scope>NUCLEOTIDE SEQUENCE [LARGE SCALE GENOMIC DNA]</scope>
    <source>
        <strain>Philadelphia 1 / ATCC 33152 / DSM 7513</strain>
    </source>
</reference>
<accession>Q5ZU96</accession>
<gene>
    <name evidence="1" type="primary">gltX</name>
    <name type="ordered locus">lpg1911</name>
</gene>
<dbReference type="EC" id="6.1.1.17" evidence="1"/>
<dbReference type="EMBL" id="AE017354">
    <property type="protein sequence ID" value="AAU27981.1"/>
    <property type="status" value="ALT_INIT"/>
    <property type="molecule type" value="Genomic_DNA"/>
</dbReference>
<dbReference type="RefSeq" id="WP_015444383.1">
    <property type="nucleotide sequence ID" value="NC_002942.5"/>
</dbReference>
<dbReference type="RefSeq" id="YP_095928.1">
    <property type="nucleotide sequence ID" value="NC_002942.5"/>
</dbReference>
<dbReference type="SMR" id="Q5ZU96"/>
<dbReference type="STRING" id="272624.lpg1911"/>
<dbReference type="PaxDb" id="272624-lpg1911"/>
<dbReference type="GeneID" id="57035903"/>
<dbReference type="KEGG" id="lpn:lpg1911"/>
<dbReference type="PATRIC" id="fig|272624.6.peg.1996"/>
<dbReference type="eggNOG" id="COG0008">
    <property type="taxonomic scope" value="Bacteria"/>
</dbReference>
<dbReference type="HOGENOM" id="CLU_015768_6_3_6"/>
<dbReference type="OrthoDB" id="9807503at2"/>
<dbReference type="Proteomes" id="UP000000609">
    <property type="component" value="Chromosome"/>
</dbReference>
<dbReference type="GO" id="GO:0005829">
    <property type="term" value="C:cytosol"/>
    <property type="evidence" value="ECO:0007669"/>
    <property type="project" value="TreeGrafter"/>
</dbReference>
<dbReference type="GO" id="GO:0005524">
    <property type="term" value="F:ATP binding"/>
    <property type="evidence" value="ECO:0007669"/>
    <property type="project" value="UniProtKB-UniRule"/>
</dbReference>
<dbReference type="GO" id="GO:0004818">
    <property type="term" value="F:glutamate-tRNA ligase activity"/>
    <property type="evidence" value="ECO:0007669"/>
    <property type="project" value="UniProtKB-UniRule"/>
</dbReference>
<dbReference type="GO" id="GO:0000049">
    <property type="term" value="F:tRNA binding"/>
    <property type="evidence" value="ECO:0007669"/>
    <property type="project" value="InterPro"/>
</dbReference>
<dbReference type="GO" id="GO:0008270">
    <property type="term" value="F:zinc ion binding"/>
    <property type="evidence" value="ECO:0007669"/>
    <property type="project" value="InterPro"/>
</dbReference>
<dbReference type="GO" id="GO:0006424">
    <property type="term" value="P:glutamyl-tRNA aminoacylation"/>
    <property type="evidence" value="ECO:0007669"/>
    <property type="project" value="UniProtKB-UniRule"/>
</dbReference>
<dbReference type="CDD" id="cd00808">
    <property type="entry name" value="GluRS_core"/>
    <property type="match status" value="1"/>
</dbReference>
<dbReference type="FunFam" id="3.40.50.620:FF:000007">
    <property type="entry name" value="Glutamate--tRNA ligase"/>
    <property type="match status" value="1"/>
</dbReference>
<dbReference type="Gene3D" id="1.10.10.350">
    <property type="match status" value="1"/>
</dbReference>
<dbReference type="Gene3D" id="3.40.50.620">
    <property type="entry name" value="HUPs"/>
    <property type="match status" value="1"/>
</dbReference>
<dbReference type="HAMAP" id="MF_00022">
    <property type="entry name" value="Glu_tRNA_synth_type1"/>
    <property type="match status" value="1"/>
</dbReference>
<dbReference type="InterPro" id="IPR045462">
    <property type="entry name" value="aa-tRNA-synth_I_cd-bd"/>
</dbReference>
<dbReference type="InterPro" id="IPR020751">
    <property type="entry name" value="aa-tRNA-synth_I_codon-bd_sub2"/>
</dbReference>
<dbReference type="InterPro" id="IPR001412">
    <property type="entry name" value="aa-tRNA-synth_I_CS"/>
</dbReference>
<dbReference type="InterPro" id="IPR008925">
    <property type="entry name" value="aa_tRNA-synth_I_cd-bd_sf"/>
</dbReference>
<dbReference type="InterPro" id="IPR004527">
    <property type="entry name" value="Glu-tRNA-ligase_bac/mito"/>
</dbReference>
<dbReference type="InterPro" id="IPR000924">
    <property type="entry name" value="Glu/Gln-tRNA-synth"/>
</dbReference>
<dbReference type="InterPro" id="IPR020058">
    <property type="entry name" value="Glu/Gln-tRNA-synth_Ib_cat-dom"/>
</dbReference>
<dbReference type="InterPro" id="IPR049940">
    <property type="entry name" value="GluQ/Sye"/>
</dbReference>
<dbReference type="InterPro" id="IPR033910">
    <property type="entry name" value="GluRS_core"/>
</dbReference>
<dbReference type="InterPro" id="IPR014729">
    <property type="entry name" value="Rossmann-like_a/b/a_fold"/>
</dbReference>
<dbReference type="NCBIfam" id="TIGR00464">
    <property type="entry name" value="gltX_bact"/>
    <property type="match status" value="1"/>
</dbReference>
<dbReference type="PANTHER" id="PTHR43311">
    <property type="entry name" value="GLUTAMATE--TRNA LIGASE"/>
    <property type="match status" value="1"/>
</dbReference>
<dbReference type="PANTHER" id="PTHR43311:SF2">
    <property type="entry name" value="GLUTAMATE--TRNA LIGASE, MITOCHONDRIAL-RELATED"/>
    <property type="match status" value="1"/>
</dbReference>
<dbReference type="Pfam" id="PF19269">
    <property type="entry name" value="Anticodon_2"/>
    <property type="match status" value="1"/>
</dbReference>
<dbReference type="Pfam" id="PF00749">
    <property type="entry name" value="tRNA-synt_1c"/>
    <property type="match status" value="1"/>
</dbReference>
<dbReference type="PRINTS" id="PR00987">
    <property type="entry name" value="TRNASYNTHGLU"/>
</dbReference>
<dbReference type="SUPFAM" id="SSF48163">
    <property type="entry name" value="An anticodon-binding domain of class I aminoacyl-tRNA synthetases"/>
    <property type="match status" value="1"/>
</dbReference>
<dbReference type="SUPFAM" id="SSF52374">
    <property type="entry name" value="Nucleotidylyl transferase"/>
    <property type="match status" value="1"/>
</dbReference>
<dbReference type="PROSITE" id="PS00178">
    <property type="entry name" value="AA_TRNA_LIGASE_I"/>
    <property type="match status" value="1"/>
</dbReference>
<comment type="function">
    <text evidence="1">Catalyzes the attachment of glutamate to tRNA(Glu) in a two-step reaction: glutamate is first activated by ATP to form Glu-AMP and then transferred to the acceptor end of tRNA(Glu).</text>
</comment>
<comment type="catalytic activity">
    <reaction evidence="1">
        <text>tRNA(Glu) + L-glutamate + ATP = L-glutamyl-tRNA(Glu) + AMP + diphosphate</text>
        <dbReference type="Rhea" id="RHEA:23540"/>
        <dbReference type="Rhea" id="RHEA-COMP:9663"/>
        <dbReference type="Rhea" id="RHEA-COMP:9680"/>
        <dbReference type="ChEBI" id="CHEBI:29985"/>
        <dbReference type="ChEBI" id="CHEBI:30616"/>
        <dbReference type="ChEBI" id="CHEBI:33019"/>
        <dbReference type="ChEBI" id="CHEBI:78442"/>
        <dbReference type="ChEBI" id="CHEBI:78520"/>
        <dbReference type="ChEBI" id="CHEBI:456215"/>
        <dbReference type="EC" id="6.1.1.17"/>
    </reaction>
</comment>
<comment type="subunit">
    <text evidence="1">Monomer.</text>
</comment>
<comment type="subcellular location">
    <subcellularLocation>
        <location evidence="1">Cytoplasm</location>
    </subcellularLocation>
</comment>
<comment type="similarity">
    <text evidence="1">Belongs to the class-I aminoacyl-tRNA synthetase family. Glutamate--tRNA ligase type 1 subfamily.</text>
</comment>
<comment type="sequence caution" evidence="2">
    <conflict type="erroneous initiation">
        <sequence resource="EMBL-CDS" id="AAU27981"/>
    </conflict>
</comment>
<feature type="chain" id="PRO_0000119587" description="Glutamate--tRNA ligase">
    <location>
        <begin position="1"/>
        <end position="470"/>
    </location>
</feature>
<feature type="short sequence motif" description="'HIGH' region" evidence="1">
    <location>
        <begin position="9"/>
        <end position="19"/>
    </location>
</feature>
<feature type="short sequence motif" description="'KMSKS' region" evidence="1">
    <location>
        <begin position="236"/>
        <end position="240"/>
    </location>
</feature>
<feature type="binding site" evidence="1">
    <location>
        <position position="239"/>
    </location>
    <ligand>
        <name>ATP</name>
        <dbReference type="ChEBI" id="CHEBI:30616"/>
    </ligand>
</feature>
<protein>
    <recommendedName>
        <fullName evidence="1">Glutamate--tRNA ligase</fullName>
        <ecNumber evidence="1">6.1.1.17</ecNumber>
    </recommendedName>
    <alternativeName>
        <fullName evidence="1">Glutamyl-tRNA synthetase</fullName>
        <shortName evidence="1">GluRS</shortName>
    </alternativeName>
</protein>